<keyword id="KW-0687">Ribonucleoprotein</keyword>
<keyword id="KW-0689">Ribosomal protein</keyword>
<protein>
    <recommendedName>
        <fullName evidence="1">Large ribosomal subunit protein uL30</fullName>
    </recommendedName>
    <alternativeName>
        <fullName evidence="2">50S ribosomal protein L30</fullName>
    </alternativeName>
</protein>
<accession>A4YBW5</accession>
<gene>
    <name evidence="1" type="primary">rpmD</name>
    <name type="ordered locus">Sputcn32_3741</name>
</gene>
<evidence type="ECO:0000255" key="1">
    <source>
        <dbReference type="HAMAP-Rule" id="MF_01371"/>
    </source>
</evidence>
<evidence type="ECO:0000305" key="2"/>
<name>RL30_SHEPC</name>
<organism>
    <name type="scientific">Shewanella putrefaciens (strain CN-32 / ATCC BAA-453)</name>
    <dbReference type="NCBI Taxonomy" id="319224"/>
    <lineage>
        <taxon>Bacteria</taxon>
        <taxon>Pseudomonadati</taxon>
        <taxon>Pseudomonadota</taxon>
        <taxon>Gammaproteobacteria</taxon>
        <taxon>Alteromonadales</taxon>
        <taxon>Shewanellaceae</taxon>
        <taxon>Shewanella</taxon>
    </lineage>
</organism>
<proteinExistence type="inferred from homology"/>
<sequence length="60" mass="6683">MATKTVKVTQTKSGIGRLPKHRATLTGLGLRRIGHTVELEDTPSVRGMINKVYYMVKVED</sequence>
<reference key="1">
    <citation type="submission" date="2007-04" db="EMBL/GenBank/DDBJ databases">
        <title>Complete sequence of Shewanella putrefaciens CN-32.</title>
        <authorList>
            <consortium name="US DOE Joint Genome Institute"/>
            <person name="Copeland A."/>
            <person name="Lucas S."/>
            <person name="Lapidus A."/>
            <person name="Barry K."/>
            <person name="Detter J.C."/>
            <person name="Glavina del Rio T."/>
            <person name="Hammon N."/>
            <person name="Israni S."/>
            <person name="Dalin E."/>
            <person name="Tice H."/>
            <person name="Pitluck S."/>
            <person name="Chain P."/>
            <person name="Malfatti S."/>
            <person name="Shin M."/>
            <person name="Vergez L."/>
            <person name="Schmutz J."/>
            <person name="Larimer F."/>
            <person name="Land M."/>
            <person name="Hauser L."/>
            <person name="Kyrpides N."/>
            <person name="Mikhailova N."/>
            <person name="Romine M.F."/>
            <person name="Fredrickson J."/>
            <person name="Tiedje J."/>
            <person name="Richardson P."/>
        </authorList>
    </citation>
    <scope>NUCLEOTIDE SEQUENCE [LARGE SCALE GENOMIC DNA]</scope>
    <source>
        <strain>CN-32 / ATCC BAA-453</strain>
    </source>
</reference>
<feature type="chain" id="PRO_1000056108" description="Large ribosomal subunit protein uL30">
    <location>
        <begin position="1"/>
        <end position="60"/>
    </location>
</feature>
<dbReference type="EMBL" id="CP000681">
    <property type="protein sequence ID" value="ABP77448.1"/>
    <property type="molecule type" value="Genomic_DNA"/>
</dbReference>
<dbReference type="SMR" id="A4YBW5"/>
<dbReference type="STRING" id="319224.Sputcn32_3741"/>
<dbReference type="KEGG" id="spc:Sputcn32_3741"/>
<dbReference type="eggNOG" id="COG1841">
    <property type="taxonomic scope" value="Bacteria"/>
</dbReference>
<dbReference type="HOGENOM" id="CLU_131047_1_4_6"/>
<dbReference type="GO" id="GO:0022625">
    <property type="term" value="C:cytosolic large ribosomal subunit"/>
    <property type="evidence" value="ECO:0007669"/>
    <property type="project" value="TreeGrafter"/>
</dbReference>
<dbReference type="GO" id="GO:0003735">
    <property type="term" value="F:structural constituent of ribosome"/>
    <property type="evidence" value="ECO:0007669"/>
    <property type="project" value="InterPro"/>
</dbReference>
<dbReference type="GO" id="GO:0006412">
    <property type="term" value="P:translation"/>
    <property type="evidence" value="ECO:0007669"/>
    <property type="project" value="UniProtKB-UniRule"/>
</dbReference>
<dbReference type="CDD" id="cd01658">
    <property type="entry name" value="Ribosomal_L30"/>
    <property type="match status" value="1"/>
</dbReference>
<dbReference type="FunFam" id="3.30.1390.20:FF:000001">
    <property type="entry name" value="50S ribosomal protein L30"/>
    <property type="match status" value="1"/>
</dbReference>
<dbReference type="Gene3D" id="3.30.1390.20">
    <property type="entry name" value="Ribosomal protein L30, ferredoxin-like fold domain"/>
    <property type="match status" value="1"/>
</dbReference>
<dbReference type="HAMAP" id="MF_01371_B">
    <property type="entry name" value="Ribosomal_uL30_B"/>
    <property type="match status" value="1"/>
</dbReference>
<dbReference type="InterPro" id="IPR036919">
    <property type="entry name" value="Ribo_uL30_ferredoxin-like_sf"/>
</dbReference>
<dbReference type="InterPro" id="IPR005996">
    <property type="entry name" value="Ribosomal_uL30_bac-type"/>
</dbReference>
<dbReference type="InterPro" id="IPR018038">
    <property type="entry name" value="Ribosomal_uL30_CS"/>
</dbReference>
<dbReference type="InterPro" id="IPR016082">
    <property type="entry name" value="Ribosomal_uL30_ferredoxin-like"/>
</dbReference>
<dbReference type="NCBIfam" id="TIGR01308">
    <property type="entry name" value="rpmD_bact"/>
    <property type="match status" value="1"/>
</dbReference>
<dbReference type="PANTHER" id="PTHR15892:SF2">
    <property type="entry name" value="LARGE RIBOSOMAL SUBUNIT PROTEIN UL30M"/>
    <property type="match status" value="1"/>
</dbReference>
<dbReference type="PANTHER" id="PTHR15892">
    <property type="entry name" value="MITOCHONDRIAL RIBOSOMAL PROTEIN L30"/>
    <property type="match status" value="1"/>
</dbReference>
<dbReference type="Pfam" id="PF00327">
    <property type="entry name" value="Ribosomal_L30"/>
    <property type="match status" value="1"/>
</dbReference>
<dbReference type="PIRSF" id="PIRSF002211">
    <property type="entry name" value="Ribosomal_L30_bac-type"/>
    <property type="match status" value="1"/>
</dbReference>
<dbReference type="SUPFAM" id="SSF55129">
    <property type="entry name" value="Ribosomal protein L30p/L7e"/>
    <property type="match status" value="1"/>
</dbReference>
<dbReference type="PROSITE" id="PS00634">
    <property type="entry name" value="RIBOSOMAL_L30"/>
    <property type="match status" value="1"/>
</dbReference>
<comment type="subunit">
    <text evidence="1">Part of the 50S ribosomal subunit.</text>
</comment>
<comment type="similarity">
    <text evidence="1">Belongs to the universal ribosomal protein uL30 family.</text>
</comment>